<name>FLUC2_BACCR</name>
<evidence type="ECO:0000255" key="1">
    <source>
        <dbReference type="HAMAP-Rule" id="MF_00454"/>
    </source>
</evidence>
<sequence>MIEALLVATGGFFGAITRFAISNWFKKRNKTQFPLATFLINITGAFLLGYIIGNGVTTGWQLLLGTGFMGAFTTFSTFKLEAVQLLNRKNISTFLLYLSATYIIGILFAFLGMKLGGI</sequence>
<keyword id="KW-1003">Cell membrane</keyword>
<keyword id="KW-0407">Ion channel</keyword>
<keyword id="KW-0406">Ion transport</keyword>
<keyword id="KW-0472">Membrane</keyword>
<keyword id="KW-0479">Metal-binding</keyword>
<keyword id="KW-1185">Reference proteome</keyword>
<keyword id="KW-0915">Sodium</keyword>
<keyword id="KW-0812">Transmembrane</keyword>
<keyword id="KW-1133">Transmembrane helix</keyword>
<keyword id="KW-0813">Transport</keyword>
<organism>
    <name type="scientific">Bacillus cereus (strain ATCC 14579 / DSM 31 / CCUG 7414 / JCM 2152 / NBRC 15305 / NCIMB 9373 / NCTC 2599 / NRRL B-3711)</name>
    <dbReference type="NCBI Taxonomy" id="226900"/>
    <lineage>
        <taxon>Bacteria</taxon>
        <taxon>Bacillati</taxon>
        <taxon>Bacillota</taxon>
        <taxon>Bacilli</taxon>
        <taxon>Bacillales</taxon>
        <taxon>Bacillaceae</taxon>
        <taxon>Bacillus</taxon>
        <taxon>Bacillus cereus group</taxon>
    </lineage>
</organism>
<feature type="chain" id="PRO_0000110044" description="Fluoride-specific ion channel FluC 2">
    <location>
        <begin position="1"/>
        <end position="118"/>
    </location>
</feature>
<feature type="transmembrane region" description="Helical" evidence="1">
    <location>
        <begin position="1"/>
        <end position="21"/>
    </location>
</feature>
<feature type="transmembrane region" description="Helical" evidence="1">
    <location>
        <begin position="33"/>
        <end position="53"/>
    </location>
</feature>
<feature type="transmembrane region" description="Helical" evidence="1">
    <location>
        <begin position="55"/>
        <end position="75"/>
    </location>
</feature>
<feature type="transmembrane region" description="Helical" evidence="1">
    <location>
        <begin position="91"/>
        <end position="111"/>
    </location>
</feature>
<feature type="binding site" evidence="1">
    <location>
        <position position="70"/>
    </location>
    <ligand>
        <name>Na(+)</name>
        <dbReference type="ChEBI" id="CHEBI:29101"/>
        <note>structural</note>
    </ligand>
</feature>
<feature type="binding site" evidence="1">
    <location>
        <position position="73"/>
    </location>
    <ligand>
        <name>Na(+)</name>
        <dbReference type="ChEBI" id="CHEBI:29101"/>
        <note>structural</note>
    </ligand>
</feature>
<dbReference type="EMBL" id="AE016877">
    <property type="protein sequence ID" value="AAP11937.1"/>
    <property type="molecule type" value="Genomic_DNA"/>
</dbReference>
<dbReference type="RefSeq" id="NP_834736.1">
    <property type="nucleotide sequence ID" value="NC_004722.1"/>
</dbReference>
<dbReference type="SMR" id="Q815R5"/>
<dbReference type="STRING" id="226900.BC_5068"/>
<dbReference type="KEGG" id="bce:BC5068"/>
<dbReference type="PATRIC" id="fig|226900.8.peg.5227"/>
<dbReference type="HOGENOM" id="CLU_114342_2_3_9"/>
<dbReference type="OrthoDB" id="9815830at2"/>
<dbReference type="Proteomes" id="UP000001417">
    <property type="component" value="Chromosome"/>
</dbReference>
<dbReference type="GO" id="GO:0005886">
    <property type="term" value="C:plasma membrane"/>
    <property type="evidence" value="ECO:0000318"/>
    <property type="project" value="GO_Central"/>
</dbReference>
<dbReference type="GO" id="GO:0062054">
    <property type="term" value="F:fluoride channel activity"/>
    <property type="evidence" value="ECO:0007669"/>
    <property type="project" value="UniProtKB-UniRule"/>
</dbReference>
<dbReference type="GO" id="GO:1903425">
    <property type="term" value="F:fluoride transmembrane transporter activity"/>
    <property type="evidence" value="ECO:0000318"/>
    <property type="project" value="GO_Central"/>
</dbReference>
<dbReference type="GO" id="GO:0046872">
    <property type="term" value="F:metal ion binding"/>
    <property type="evidence" value="ECO:0007669"/>
    <property type="project" value="UniProtKB-KW"/>
</dbReference>
<dbReference type="GO" id="GO:0140114">
    <property type="term" value="P:cellular detoxification of fluoride"/>
    <property type="evidence" value="ECO:0007669"/>
    <property type="project" value="UniProtKB-UniRule"/>
</dbReference>
<dbReference type="GO" id="GO:1903424">
    <property type="term" value="P:fluoride transmembrane transport"/>
    <property type="evidence" value="ECO:0000318"/>
    <property type="project" value="GO_Central"/>
</dbReference>
<dbReference type="HAMAP" id="MF_00454">
    <property type="entry name" value="FluC"/>
    <property type="match status" value="1"/>
</dbReference>
<dbReference type="InterPro" id="IPR003691">
    <property type="entry name" value="FluC"/>
</dbReference>
<dbReference type="NCBIfam" id="TIGR00494">
    <property type="entry name" value="crcB"/>
    <property type="match status" value="1"/>
</dbReference>
<dbReference type="NCBIfam" id="NF010801">
    <property type="entry name" value="PRK14205.1"/>
    <property type="match status" value="1"/>
</dbReference>
<dbReference type="PANTHER" id="PTHR28259">
    <property type="entry name" value="FLUORIDE EXPORT PROTEIN 1-RELATED"/>
    <property type="match status" value="1"/>
</dbReference>
<dbReference type="PANTHER" id="PTHR28259:SF16">
    <property type="entry name" value="FLUORIDE-SPECIFIC ION CHANNEL FLUC 2"/>
    <property type="match status" value="1"/>
</dbReference>
<dbReference type="Pfam" id="PF02537">
    <property type="entry name" value="CRCB"/>
    <property type="match status" value="1"/>
</dbReference>
<accession>Q815R5</accession>
<comment type="function">
    <text evidence="1">Fluoride-specific ion channel. Important for reducing fluoride concentration in the cell, thus reducing its toxicity.</text>
</comment>
<comment type="catalytic activity">
    <reaction evidence="1">
        <text>fluoride(in) = fluoride(out)</text>
        <dbReference type="Rhea" id="RHEA:76159"/>
        <dbReference type="ChEBI" id="CHEBI:17051"/>
    </reaction>
    <physiologicalReaction direction="left-to-right" evidence="1">
        <dbReference type="Rhea" id="RHEA:76160"/>
    </physiologicalReaction>
</comment>
<comment type="activity regulation">
    <text evidence="1">Na(+) is not transported, but it plays an essential structural role and its presence is essential for fluoride channel function.</text>
</comment>
<comment type="subcellular location">
    <subcellularLocation>
        <location evidence="1">Cell membrane</location>
        <topology evidence="1">Multi-pass membrane protein</topology>
    </subcellularLocation>
</comment>
<comment type="similarity">
    <text evidence="1">Belongs to the fluoride channel Fluc/FEX (TC 1.A.43) family.</text>
</comment>
<proteinExistence type="inferred from homology"/>
<protein>
    <recommendedName>
        <fullName evidence="1">Fluoride-specific ion channel FluC 2</fullName>
    </recommendedName>
</protein>
<gene>
    <name evidence="1" type="primary">fluC2</name>
    <name evidence="1" type="synonym">crcB2</name>
    <name type="ordered locus">BC_5068</name>
</gene>
<reference key="1">
    <citation type="journal article" date="2003" name="Nature">
        <title>Genome sequence of Bacillus cereus and comparative analysis with Bacillus anthracis.</title>
        <authorList>
            <person name="Ivanova N."/>
            <person name="Sorokin A."/>
            <person name="Anderson I."/>
            <person name="Galleron N."/>
            <person name="Candelon B."/>
            <person name="Kapatral V."/>
            <person name="Bhattacharyya A."/>
            <person name="Reznik G."/>
            <person name="Mikhailova N."/>
            <person name="Lapidus A."/>
            <person name="Chu L."/>
            <person name="Mazur M."/>
            <person name="Goltsman E."/>
            <person name="Larsen N."/>
            <person name="D'Souza M."/>
            <person name="Walunas T."/>
            <person name="Grechkin Y."/>
            <person name="Pusch G."/>
            <person name="Haselkorn R."/>
            <person name="Fonstein M."/>
            <person name="Ehrlich S.D."/>
            <person name="Overbeek R."/>
            <person name="Kyrpides N.C."/>
        </authorList>
    </citation>
    <scope>NUCLEOTIDE SEQUENCE [LARGE SCALE GENOMIC DNA]</scope>
    <source>
        <strain>ATCC 14579 / DSM 31 / CCUG 7414 / JCM 2152 / NBRC 15305 / NCIMB 9373 / NCTC 2599 / NRRL B-3711</strain>
    </source>
</reference>